<sequence length="513" mass="55499">MQLNSTEISELIKKRIAQFDVVSEARNTGTIVSVSDGIIRIHGLSEVMQGEMIALPTGRFAMALNLERDSVGAVVMGPYTDLAEGMEVQCTGRILEVPVGRGLLGRVVNTLGQPIDGKGEIKNDGFSPVEVIAPGVIDRKSVDQPVQTGYKAVDSMVPIGRGQRELIIGDRQTGKTALAIDAIINQRDSGVKCIYVAVGQKASTIANVVRKLEENGALANTIVVAASASESAALQYLAPYAGCAMGEYFRDRGEDALIVYDDLSKQAVAYRQISLLLRRPPGREAYPGDVFYLHSRLLERAARVNEEYVENFTKGEVKGKTGSLTALPIIETQAGDVSAFVPTNVISITDGQIFLESNLFNAGVRPAVNPGISVSRVGGAAQTKAVKKLAGGIRTALAQYRELAAFAQFASDLDDATRKQLSHGEKVTELLKQKQYAPLSVAEQAVILFAVEFGYLDDVELNKIADFETALLDYANRTNTEFMQELTKSGDYNDEIKNTLKGILDNFKANNTW</sequence>
<evidence type="ECO:0000255" key="1">
    <source>
        <dbReference type="HAMAP-Rule" id="MF_01346"/>
    </source>
</evidence>
<proteinExistence type="inferred from homology"/>
<reference key="1">
    <citation type="journal article" date="2004" name="Nat. Biotechnol.">
        <title>The genome sequence of the capnophilic rumen bacterium Mannheimia succiniciproducens.</title>
        <authorList>
            <person name="Hong S.H."/>
            <person name="Kim J.S."/>
            <person name="Lee S.Y."/>
            <person name="In Y.H."/>
            <person name="Choi S.S."/>
            <person name="Rih J.-K."/>
            <person name="Kim C.H."/>
            <person name="Jeong H."/>
            <person name="Hur C.G."/>
            <person name="Kim J.J."/>
        </authorList>
    </citation>
    <scope>NUCLEOTIDE SEQUENCE [LARGE SCALE GENOMIC DNA]</scope>
    <source>
        <strain>KCTC 0769BP / MBEL55E</strain>
    </source>
</reference>
<keyword id="KW-0066">ATP synthesis</keyword>
<keyword id="KW-0067">ATP-binding</keyword>
<keyword id="KW-0997">Cell inner membrane</keyword>
<keyword id="KW-1003">Cell membrane</keyword>
<keyword id="KW-0139">CF(1)</keyword>
<keyword id="KW-0375">Hydrogen ion transport</keyword>
<keyword id="KW-0406">Ion transport</keyword>
<keyword id="KW-0472">Membrane</keyword>
<keyword id="KW-0547">Nucleotide-binding</keyword>
<keyword id="KW-1278">Translocase</keyword>
<keyword id="KW-0813">Transport</keyword>
<dbReference type="EC" id="7.1.2.2" evidence="1"/>
<dbReference type="EMBL" id="AE016827">
    <property type="protein sequence ID" value="AAU38955.1"/>
    <property type="molecule type" value="Genomic_DNA"/>
</dbReference>
<dbReference type="RefSeq" id="WP_011201493.1">
    <property type="nucleotide sequence ID" value="NC_006300.1"/>
</dbReference>
<dbReference type="SMR" id="Q65Q05"/>
<dbReference type="STRING" id="221988.MS2348"/>
<dbReference type="KEGG" id="msu:MS2348"/>
<dbReference type="eggNOG" id="COG0056">
    <property type="taxonomic scope" value="Bacteria"/>
</dbReference>
<dbReference type="HOGENOM" id="CLU_010091_2_1_6"/>
<dbReference type="OrthoDB" id="9803053at2"/>
<dbReference type="Proteomes" id="UP000000607">
    <property type="component" value="Chromosome"/>
</dbReference>
<dbReference type="GO" id="GO:0005886">
    <property type="term" value="C:plasma membrane"/>
    <property type="evidence" value="ECO:0007669"/>
    <property type="project" value="UniProtKB-SubCell"/>
</dbReference>
<dbReference type="GO" id="GO:0045259">
    <property type="term" value="C:proton-transporting ATP synthase complex"/>
    <property type="evidence" value="ECO:0007669"/>
    <property type="project" value="UniProtKB-KW"/>
</dbReference>
<dbReference type="GO" id="GO:0043531">
    <property type="term" value="F:ADP binding"/>
    <property type="evidence" value="ECO:0007669"/>
    <property type="project" value="TreeGrafter"/>
</dbReference>
<dbReference type="GO" id="GO:0005524">
    <property type="term" value="F:ATP binding"/>
    <property type="evidence" value="ECO:0007669"/>
    <property type="project" value="UniProtKB-UniRule"/>
</dbReference>
<dbReference type="GO" id="GO:0046933">
    <property type="term" value="F:proton-transporting ATP synthase activity, rotational mechanism"/>
    <property type="evidence" value="ECO:0007669"/>
    <property type="project" value="UniProtKB-UniRule"/>
</dbReference>
<dbReference type="CDD" id="cd18113">
    <property type="entry name" value="ATP-synt_F1_alpha_C"/>
    <property type="match status" value="1"/>
</dbReference>
<dbReference type="CDD" id="cd18116">
    <property type="entry name" value="ATP-synt_F1_alpha_N"/>
    <property type="match status" value="1"/>
</dbReference>
<dbReference type="CDD" id="cd01132">
    <property type="entry name" value="F1-ATPase_alpha_CD"/>
    <property type="match status" value="1"/>
</dbReference>
<dbReference type="FunFam" id="1.20.150.20:FF:000001">
    <property type="entry name" value="ATP synthase subunit alpha"/>
    <property type="match status" value="1"/>
</dbReference>
<dbReference type="FunFam" id="2.40.30.20:FF:000001">
    <property type="entry name" value="ATP synthase subunit alpha"/>
    <property type="match status" value="1"/>
</dbReference>
<dbReference type="FunFam" id="3.40.50.300:FF:000002">
    <property type="entry name" value="ATP synthase subunit alpha"/>
    <property type="match status" value="1"/>
</dbReference>
<dbReference type="Gene3D" id="2.40.30.20">
    <property type="match status" value="1"/>
</dbReference>
<dbReference type="Gene3D" id="1.20.150.20">
    <property type="entry name" value="ATP synthase alpha/beta chain, C-terminal domain"/>
    <property type="match status" value="1"/>
</dbReference>
<dbReference type="Gene3D" id="3.40.50.300">
    <property type="entry name" value="P-loop containing nucleotide triphosphate hydrolases"/>
    <property type="match status" value="1"/>
</dbReference>
<dbReference type="HAMAP" id="MF_01346">
    <property type="entry name" value="ATP_synth_alpha_bact"/>
    <property type="match status" value="1"/>
</dbReference>
<dbReference type="InterPro" id="IPR023366">
    <property type="entry name" value="ATP_synth_asu-like_sf"/>
</dbReference>
<dbReference type="InterPro" id="IPR000793">
    <property type="entry name" value="ATP_synth_asu_C"/>
</dbReference>
<dbReference type="InterPro" id="IPR038376">
    <property type="entry name" value="ATP_synth_asu_C_sf"/>
</dbReference>
<dbReference type="InterPro" id="IPR033732">
    <property type="entry name" value="ATP_synth_F1_a_nt-bd_dom"/>
</dbReference>
<dbReference type="InterPro" id="IPR005294">
    <property type="entry name" value="ATP_synth_F1_asu"/>
</dbReference>
<dbReference type="InterPro" id="IPR020003">
    <property type="entry name" value="ATPase_a/bsu_AS"/>
</dbReference>
<dbReference type="InterPro" id="IPR004100">
    <property type="entry name" value="ATPase_F1/V1/A1_a/bsu_N"/>
</dbReference>
<dbReference type="InterPro" id="IPR036121">
    <property type="entry name" value="ATPase_F1/V1/A1_a/bsu_N_sf"/>
</dbReference>
<dbReference type="InterPro" id="IPR000194">
    <property type="entry name" value="ATPase_F1/V1/A1_a/bsu_nucl-bd"/>
</dbReference>
<dbReference type="InterPro" id="IPR027417">
    <property type="entry name" value="P-loop_NTPase"/>
</dbReference>
<dbReference type="NCBIfam" id="TIGR00962">
    <property type="entry name" value="atpA"/>
    <property type="match status" value="1"/>
</dbReference>
<dbReference type="NCBIfam" id="NF009884">
    <property type="entry name" value="PRK13343.1"/>
    <property type="match status" value="1"/>
</dbReference>
<dbReference type="PANTHER" id="PTHR48082">
    <property type="entry name" value="ATP SYNTHASE SUBUNIT ALPHA, MITOCHONDRIAL"/>
    <property type="match status" value="1"/>
</dbReference>
<dbReference type="PANTHER" id="PTHR48082:SF2">
    <property type="entry name" value="ATP SYNTHASE SUBUNIT ALPHA, MITOCHONDRIAL"/>
    <property type="match status" value="1"/>
</dbReference>
<dbReference type="Pfam" id="PF00006">
    <property type="entry name" value="ATP-synt_ab"/>
    <property type="match status" value="1"/>
</dbReference>
<dbReference type="Pfam" id="PF00306">
    <property type="entry name" value="ATP-synt_ab_C"/>
    <property type="match status" value="1"/>
</dbReference>
<dbReference type="Pfam" id="PF02874">
    <property type="entry name" value="ATP-synt_ab_N"/>
    <property type="match status" value="1"/>
</dbReference>
<dbReference type="PIRSF" id="PIRSF039088">
    <property type="entry name" value="F_ATPase_subunit_alpha"/>
    <property type="match status" value="1"/>
</dbReference>
<dbReference type="SUPFAM" id="SSF47917">
    <property type="entry name" value="C-terminal domain of alpha and beta subunits of F1 ATP synthase"/>
    <property type="match status" value="1"/>
</dbReference>
<dbReference type="SUPFAM" id="SSF50615">
    <property type="entry name" value="N-terminal domain of alpha and beta subunits of F1 ATP synthase"/>
    <property type="match status" value="1"/>
</dbReference>
<dbReference type="SUPFAM" id="SSF52540">
    <property type="entry name" value="P-loop containing nucleoside triphosphate hydrolases"/>
    <property type="match status" value="1"/>
</dbReference>
<dbReference type="PROSITE" id="PS00152">
    <property type="entry name" value="ATPASE_ALPHA_BETA"/>
    <property type="match status" value="1"/>
</dbReference>
<name>ATPA_MANSM</name>
<gene>
    <name evidence="1" type="primary">atpA</name>
    <name type="ordered locus">MS2348</name>
</gene>
<feature type="chain" id="PRO_0000238284" description="ATP synthase subunit alpha">
    <location>
        <begin position="1"/>
        <end position="513"/>
    </location>
</feature>
<feature type="binding site" evidence="1">
    <location>
        <begin position="169"/>
        <end position="176"/>
    </location>
    <ligand>
        <name>ATP</name>
        <dbReference type="ChEBI" id="CHEBI:30616"/>
    </ligand>
</feature>
<feature type="site" description="Required for activity" evidence="1">
    <location>
        <position position="373"/>
    </location>
</feature>
<accession>Q65Q05</accession>
<protein>
    <recommendedName>
        <fullName evidence="1">ATP synthase subunit alpha</fullName>
        <ecNumber evidence="1">7.1.2.2</ecNumber>
    </recommendedName>
    <alternativeName>
        <fullName evidence="1">ATP synthase F1 sector subunit alpha</fullName>
    </alternativeName>
    <alternativeName>
        <fullName evidence="1">F-ATPase subunit alpha</fullName>
    </alternativeName>
</protein>
<comment type="function">
    <text evidence="1">Produces ATP from ADP in the presence of a proton gradient across the membrane. The alpha chain is a regulatory subunit.</text>
</comment>
<comment type="catalytic activity">
    <reaction evidence="1">
        <text>ATP + H2O + 4 H(+)(in) = ADP + phosphate + 5 H(+)(out)</text>
        <dbReference type="Rhea" id="RHEA:57720"/>
        <dbReference type="ChEBI" id="CHEBI:15377"/>
        <dbReference type="ChEBI" id="CHEBI:15378"/>
        <dbReference type="ChEBI" id="CHEBI:30616"/>
        <dbReference type="ChEBI" id="CHEBI:43474"/>
        <dbReference type="ChEBI" id="CHEBI:456216"/>
        <dbReference type="EC" id="7.1.2.2"/>
    </reaction>
</comment>
<comment type="subunit">
    <text evidence="1">F-type ATPases have 2 components, CF(1) - the catalytic core - and CF(0) - the membrane proton channel. CF(1) has five subunits: alpha(3), beta(3), gamma(1), delta(1), epsilon(1). CF(0) has three main subunits: a(1), b(2) and c(9-12). The alpha and beta chains form an alternating ring which encloses part of the gamma chain. CF(1) is attached to CF(0) by a central stalk formed by the gamma and epsilon chains, while a peripheral stalk is formed by the delta and b chains.</text>
</comment>
<comment type="subcellular location">
    <subcellularLocation>
        <location evidence="1">Cell inner membrane</location>
        <topology evidence="1">Peripheral membrane protein</topology>
    </subcellularLocation>
</comment>
<comment type="similarity">
    <text evidence="1">Belongs to the ATPase alpha/beta chains family.</text>
</comment>
<organism>
    <name type="scientific">Mannheimia succiniciproducens (strain KCTC 0769BP / MBEL55E)</name>
    <dbReference type="NCBI Taxonomy" id="221988"/>
    <lineage>
        <taxon>Bacteria</taxon>
        <taxon>Pseudomonadati</taxon>
        <taxon>Pseudomonadota</taxon>
        <taxon>Gammaproteobacteria</taxon>
        <taxon>Pasteurellales</taxon>
        <taxon>Pasteurellaceae</taxon>
        <taxon>Basfia</taxon>
    </lineage>
</organism>